<organism>
    <name type="scientific">Candida glabrata (strain ATCC 2001 / BCRC 20586 / JCM 3761 / NBRC 0622 / NRRL Y-65 / CBS 138)</name>
    <name type="common">Yeast</name>
    <name type="synonym">Nakaseomyces glabratus</name>
    <dbReference type="NCBI Taxonomy" id="284593"/>
    <lineage>
        <taxon>Eukaryota</taxon>
        <taxon>Fungi</taxon>
        <taxon>Dikarya</taxon>
        <taxon>Ascomycota</taxon>
        <taxon>Saccharomycotina</taxon>
        <taxon>Saccharomycetes</taxon>
        <taxon>Saccharomycetales</taxon>
        <taxon>Saccharomycetaceae</taxon>
        <taxon>Nakaseomyces</taxon>
    </lineage>
</organism>
<proteinExistence type="inferred from homology"/>
<name>TRM82_CANGA</name>
<comment type="function">
    <text evidence="1">Required for the formation of N(7)-methylguanine at position 46 (m7G46) in tRNA. In the complex, it is required to stabilize and induce conformational changes of the catalytic subunit.</text>
</comment>
<comment type="pathway">
    <text evidence="1">tRNA modification; N(7)-methylguanine-tRNA biosynthesis.</text>
</comment>
<comment type="subunit">
    <text evidence="1">Forms a heterodimer with the catalytic subunit TRM8.</text>
</comment>
<comment type="subcellular location">
    <subcellularLocation>
        <location evidence="1">Nucleus</location>
    </subcellularLocation>
</comment>
<comment type="similarity">
    <text evidence="1">Belongs to the WD repeat TRM82 family.</text>
</comment>
<dbReference type="EMBL" id="CR380951">
    <property type="protein sequence ID" value="CAG58649.1"/>
    <property type="molecule type" value="Genomic_DNA"/>
</dbReference>
<dbReference type="RefSeq" id="XP_445730.1">
    <property type="nucleotide sequence ID" value="XM_445730.1"/>
</dbReference>
<dbReference type="SMR" id="Q6FVL4"/>
<dbReference type="FunCoup" id="Q6FVL4">
    <property type="interactions" value="285"/>
</dbReference>
<dbReference type="STRING" id="284593.Q6FVL4"/>
<dbReference type="EnsemblFungi" id="CAGL0E00979g-T">
    <property type="protein sequence ID" value="CAGL0E00979g-T-p1"/>
    <property type="gene ID" value="CAGL0E00979g"/>
</dbReference>
<dbReference type="KEGG" id="cgr:2887360"/>
<dbReference type="CGD" id="CAL0128862">
    <property type="gene designation" value="CAGL0E00979g"/>
</dbReference>
<dbReference type="VEuPathDB" id="FungiDB:CAGL0E00979g"/>
<dbReference type="eggNOG" id="KOG3914">
    <property type="taxonomic scope" value="Eukaryota"/>
</dbReference>
<dbReference type="HOGENOM" id="CLU_022082_0_0_1"/>
<dbReference type="InParanoid" id="Q6FVL4"/>
<dbReference type="OMA" id="VKHWLFG"/>
<dbReference type="UniPathway" id="UPA00989"/>
<dbReference type="Proteomes" id="UP000002428">
    <property type="component" value="Chromosome E"/>
</dbReference>
<dbReference type="GO" id="GO:0005829">
    <property type="term" value="C:cytosol"/>
    <property type="evidence" value="ECO:0007669"/>
    <property type="project" value="EnsemblFungi"/>
</dbReference>
<dbReference type="GO" id="GO:0005634">
    <property type="term" value="C:nucleus"/>
    <property type="evidence" value="ECO:0007669"/>
    <property type="project" value="UniProtKB-SubCell"/>
</dbReference>
<dbReference type="GO" id="GO:0106143">
    <property type="term" value="C:tRNA (m7G46) methyltransferase complex"/>
    <property type="evidence" value="ECO:0007669"/>
    <property type="project" value="EnsemblFungi"/>
</dbReference>
<dbReference type="GO" id="GO:0008047">
    <property type="term" value="F:enzyme activator activity"/>
    <property type="evidence" value="ECO:0007669"/>
    <property type="project" value="EnsemblFungi"/>
</dbReference>
<dbReference type="GO" id="GO:0106004">
    <property type="term" value="P:tRNA (guanine-N7)-methylation"/>
    <property type="evidence" value="ECO:0007669"/>
    <property type="project" value="UniProtKB-UniRule"/>
</dbReference>
<dbReference type="Gene3D" id="2.130.10.10">
    <property type="entry name" value="YVTN repeat-like/Quinoprotein amine dehydrogenase"/>
    <property type="match status" value="1"/>
</dbReference>
<dbReference type="HAMAP" id="MF_03056">
    <property type="entry name" value="TRM82"/>
    <property type="match status" value="1"/>
</dbReference>
<dbReference type="InterPro" id="IPR028884">
    <property type="entry name" value="Trm82"/>
</dbReference>
<dbReference type="InterPro" id="IPR015943">
    <property type="entry name" value="WD40/YVTN_repeat-like_dom_sf"/>
</dbReference>
<dbReference type="InterPro" id="IPR036322">
    <property type="entry name" value="WD40_repeat_dom_sf"/>
</dbReference>
<dbReference type="InterPro" id="IPR001680">
    <property type="entry name" value="WD40_rpt"/>
</dbReference>
<dbReference type="PANTHER" id="PTHR16288:SF0">
    <property type="entry name" value="TRNA (GUANINE-N(7)-)-METHYLTRANSFERASE NON-CATALYTIC SUBUNIT WDR4"/>
    <property type="match status" value="1"/>
</dbReference>
<dbReference type="PANTHER" id="PTHR16288">
    <property type="entry name" value="WD40 REPEAT PROTEIN 4"/>
    <property type="match status" value="1"/>
</dbReference>
<dbReference type="SMART" id="SM00320">
    <property type="entry name" value="WD40"/>
    <property type="match status" value="3"/>
</dbReference>
<dbReference type="SUPFAM" id="SSF50978">
    <property type="entry name" value="WD40 repeat-like"/>
    <property type="match status" value="1"/>
</dbReference>
<dbReference type="PROSITE" id="PS50082">
    <property type="entry name" value="WD_REPEATS_2"/>
    <property type="match status" value="1"/>
</dbReference>
<dbReference type="PROSITE" id="PS50294">
    <property type="entry name" value="WD_REPEATS_REGION"/>
    <property type="match status" value="1"/>
</dbReference>
<protein>
    <recommendedName>
        <fullName evidence="1">tRNA (guanine-N(7)-)-methyltransferase non-catalytic subunit TRM82</fullName>
    </recommendedName>
    <alternativeName>
        <fullName evidence="1">Transfer RNA methyltransferase 82</fullName>
    </alternativeName>
</protein>
<keyword id="KW-0539">Nucleus</keyword>
<keyword id="KW-1185">Reference proteome</keyword>
<keyword id="KW-0677">Repeat</keyword>
<keyword id="KW-0819">tRNA processing</keyword>
<keyword id="KW-0853">WD repeat</keyword>
<gene>
    <name evidence="1" type="primary">TRM82</name>
    <name type="ordered locus">CAGL0E00979g</name>
</gene>
<sequence>MFVHPLNVAISDSQNKYQYVVCKHTISVFAGEKLVGYWVDTDQRDSHNSYKKLKSNAGDAKPKGSQGIGAPAVYSYIRNLRLTSDEGKLIACVDSDKSVVIFKIDTSAEDPEKFLQVMKRQQFPKRPNALALADEDTTIIVADKFGDVYKLKIDEEPIRKIDDQSEPILGHVSMLTDVAVAKDANNKSYIITTDRDEHIKISHYPQTFIVDKWLFGHKEFVSSVDLPKWQTKFLFSAGGDKEIFAWNWQSGELLSQYSFEDAVKPFINDQHLAPARFQNEENNVIEYAVASIKSCGQQPYVAFFVEATPVLFILHCNTETGELSLAQQVEFKHNVVSISSNGKSEYLVTFDNRDENAEQLIAFLTYSGDSNKPFSVDENLNKLNSSWISTFKQKDELLADADSVYPLYNIASLKKHGEHFS</sequence>
<accession>Q6FVL4</accession>
<reference key="1">
    <citation type="journal article" date="2004" name="Nature">
        <title>Genome evolution in yeasts.</title>
        <authorList>
            <person name="Dujon B."/>
            <person name="Sherman D."/>
            <person name="Fischer G."/>
            <person name="Durrens P."/>
            <person name="Casaregola S."/>
            <person name="Lafontaine I."/>
            <person name="de Montigny J."/>
            <person name="Marck C."/>
            <person name="Neuveglise C."/>
            <person name="Talla E."/>
            <person name="Goffard N."/>
            <person name="Frangeul L."/>
            <person name="Aigle M."/>
            <person name="Anthouard V."/>
            <person name="Babour A."/>
            <person name="Barbe V."/>
            <person name="Barnay S."/>
            <person name="Blanchin S."/>
            <person name="Beckerich J.-M."/>
            <person name="Beyne E."/>
            <person name="Bleykasten C."/>
            <person name="Boisrame A."/>
            <person name="Boyer J."/>
            <person name="Cattolico L."/>
            <person name="Confanioleri F."/>
            <person name="de Daruvar A."/>
            <person name="Despons L."/>
            <person name="Fabre E."/>
            <person name="Fairhead C."/>
            <person name="Ferry-Dumazet H."/>
            <person name="Groppi A."/>
            <person name="Hantraye F."/>
            <person name="Hennequin C."/>
            <person name="Jauniaux N."/>
            <person name="Joyet P."/>
            <person name="Kachouri R."/>
            <person name="Kerrest A."/>
            <person name="Koszul R."/>
            <person name="Lemaire M."/>
            <person name="Lesur I."/>
            <person name="Ma L."/>
            <person name="Muller H."/>
            <person name="Nicaud J.-M."/>
            <person name="Nikolski M."/>
            <person name="Oztas S."/>
            <person name="Ozier-Kalogeropoulos O."/>
            <person name="Pellenz S."/>
            <person name="Potier S."/>
            <person name="Richard G.-F."/>
            <person name="Straub M.-L."/>
            <person name="Suleau A."/>
            <person name="Swennen D."/>
            <person name="Tekaia F."/>
            <person name="Wesolowski-Louvel M."/>
            <person name="Westhof E."/>
            <person name="Wirth B."/>
            <person name="Zeniou-Meyer M."/>
            <person name="Zivanovic Y."/>
            <person name="Bolotin-Fukuhara M."/>
            <person name="Thierry A."/>
            <person name="Bouchier C."/>
            <person name="Caudron B."/>
            <person name="Scarpelli C."/>
            <person name="Gaillardin C."/>
            <person name="Weissenbach J."/>
            <person name="Wincker P."/>
            <person name="Souciet J.-L."/>
        </authorList>
    </citation>
    <scope>NUCLEOTIDE SEQUENCE [LARGE SCALE GENOMIC DNA]</scope>
    <source>
        <strain>ATCC 2001 / BCRC 20586 / JCM 3761 / NBRC 0622 / NRRL Y-65 / CBS 138</strain>
    </source>
</reference>
<feature type="chain" id="PRO_0000370517" description="tRNA (guanine-N(7)-)-methyltransferase non-catalytic subunit TRM82">
    <location>
        <begin position="1"/>
        <end position="421"/>
    </location>
</feature>
<feature type="repeat" description="WD 1">
    <location>
        <begin position="72"/>
        <end position="112"/>
    </location>
</feature>
<feature type="repeat" description="WD 2">
    <location>
        <begin position="170"/>
        <end position="212"/>
    </location>
</feature>
<feature type="repeat" description="WD 3">
    <location>
        <begin position="216"/>
        <end position="258"/>
    </location>
</feature>
<evidence type="ECO:0000255" key="1">
    <source>
        <dbReference type="HAMAP-Rule" id="MF_03056"/>
    </source>
</evidence>